<dbReference type="EC" id="2.7.4.3" evidence="1"/>
<dbReference type="EMBL" id="AE000512">
    <property type="protein sequence ID" value="AAD36545.1"/>
    <property type="molecule type" value="Genomic_DNA"/>
</dbReference>
<dbReference type="PIR" id="G72247">
    <property type="entry name" value="G72247"/>
</dbReference>
<dbReference type="RefSeq" id="NP_229279.1">
    <property type="nucleotide sequence ID" value="NC_000853.1"/>
</dbReference>
<dbReference type="RefSeq" id="WP_004081793.1">
    <property type="nucleotide sequence ID" value="NC_000853.1"/>
</dbReference>
<dbReference type="SMR" id="Q9X1I8"/>
<dbReference type="FunCoup" id="Q9X1I8">
    <property type="interactions" value="395"/>
</dbReference>
<dbReference type="STRING" id="243274.TM_1479"/>
<dbReference type="PaxDb" id="243274-THEMA_06905"/>
<dbReference type="EnsemblBacteria" id="AAD36545">
    <property type="protein sequence ID" value="AAD36545"/>
    <property type="gene ID" value="TM_1479"/>
</dbReference>
<dbReference type="KEGG" id="tma:TM1479"/>
<dbReference type="KEGG" id="tmi:THEMA_06905"/>
<dbReference type="KEGG" id="tmw:THMA_1511"/>
<dbReference type="PATRIC" id="fig|243274.18.peg.1334"/>
<dbReference type="eggNOG" id="COG0563">
    <property type="taxonomic scope" value="Bacteria"/>
</dbReference>
<dbReference type="InParanoid" id="Q9X1I8"/>
<dbReference type="OrthoDB" id="9805030at2"/>
<dbReference type="UniPathway" id="UPA00588">
    <property type="reaction ID" value="UER00649"/>
</dbReference>
<dbReference type="Proteomes" id="UP000008183">
    <property type="component" value="Chromosome"/>
</dbReference>
<dbReference type="GO" id="GO:0005737">
    <property type="term" value="C:cytoplasm"/>
    <property type="evidence" value="ECO:0000318"/>
    <property type="project" value="GO_Central"/>
</dbReference>
<dbReference type="GO" id="GO:0005829">
    <property type="term" value="C:cytosol"/>
    <property type="evidence" value="ECO:0000318"/>
    <property type="project" value="GO_Central"/>
</dbReference>
<dbReference type="GO" id="GO:0004017">
    <property type="term" value="F:adenylate kinase activity"/>
    <property type="evidence" value="ECO:0000318"/>
    <property type="project" value="GO_Central"/>
</dbReference>
<dbReference type="GO" id="GO:0005524">
    <property type="term" value="F:ATP binding"/>
    <property type="evidence" value="ECO:0007669"/>
    <property type="project" value="UniProtKB-UniRule"/>
</dbReference>
<dbReference type="GO" id="GO:0004550">
    <property type="term" value="F:nucleoside diphosphate kinase activity"/>
    <property type="evidence" value="ECO:0000318"/>
    <property type="project" value="GO_Central"/>
</dbReference>
<dbReference type="GO" id="GO:0008270">
    <property type="term" value="F:zinc ion binding"/>
    <property type="evidence" value="ECO:0007669"/>
    <property type="project" value="UniProtKB-UniRule"/>
</dbReference>
<dbReference type="GO" id="GO:0044209">
    <property type="term" value="P:AMP salvage"/>
    <property type="evidence" value="ECO:0007669"/>
    <property type="project" value="UniProtKB-UniRule"/>
</dbReference>
<dbReference type="GO" id="GO:0009132">
    <property type="term" value="P:nucleoside diphosphate metabolic process"/>
    <property type="evidence" value="ECO:0000318"/>
    <property type="project" value="GO_Central"/>
</dbReference>
<dbReference type="GO" id="GO:0009123">
    <property type="term" value="P:nucleoside monophosphate metabolic process"/>
    <property type="evidence" value="ECO:0000318"/>
    <property type="project" value="GO_Central"/>
</dbReference>
<dbReference type="CDD" id="cd01428">
    <property type="entry name" value="ADK"/>
    <property type="match status" value="1"/>
</dbReference>
<dbReference type="FunFam" id="3.40.50.300:FF:000106">
    <property type="entry name" value="Adenylate kinase mitochondrial"/>
    <property type="match status" value="1"/>
</dbReference>
<dbReference type="Gene3D" id="3.40.50.300">
    <property type="entry name" value="P-loop containing nucleotide triphosphate hydrolases"/>
    <property type="match status" value="1"/>
</dbReference>
<dbReference type="HAMAP" id="MF_00235">
    <property type="entry name" value="Adenylate_kinase_Adk"/>
    <property type="match status" value="1"/>
</dbReference>
<dbReference type="InterPro" id="IPR006259">
    <property type="entry name" value="Adenyl_kin_sub"/>
</dbReference>
<dbReference type="InterPro" id="IPR000850">
    <property type="entry name" value="Adenylat/UMP-CMP_kin"/>
</dbReference>
<dbReference type="InterPro" id="IPR033690">
    <property type="entry name" value="Adenylat_kinase_CS"/>
</dbReference>
<dbReference type="InterPro" id="IPR007862">
    <property type="entry name" value="Adenylate_kinase_lid-dom"/>
</dbReference>
<dbReference type="InterPro" id="IPR027417">
    <property type="entry name" value="P-loop_NTPase"/>
</dbReference>
<dbReference type="NCBIfam" id="TIGR01351">
    <property type="entry name" value="adk"/>
    <property type="match status" value="1"/>
</dbReference>
<dbReference type="NCBIfam" id="NF001380">
    <property type="entry name" value="PRK00279.1-2"/>
    <property type="match status" value="1"/>
</dbReference>
<dbReference type="NCBIfam" id="NF001381">
    <property type="entry name" value="PRK00279.1-3"/>
    <property type="match status" value="1"/>
</dbReference>
<dbReference type="NCBIfam" id="NF001386">
    <property type="entry name" value="PRK00279.2-4"/>
    <property type="match status" value="1"/>
</dbReference>
<dbReference type="NCBIfam" id="NF011100">
    <property type="entry name" value="PRK14527.1"/>
    <property type="match status" value="1"/>
</dbReference>
<dbReference type="PANTHER" id="PTHR23359">
    <property type="entry name" value="NUCLEOTIDE KINASE"/>
    <property type="match status" value="1"/>
</dbReference>
<dbReference type="Pfam" id="PF00406">
    <property type="entry name" value="ADK"/>
    <property type="match status" value="1"/>
</dbReference>
<dbReference type="Pfam" id="PF05191">
    <property type="entry name" value="ADK_lid"/>
    <property type="match status" value="1"/>
</dbReference>
<dbReference type="PRINTS" id="PR00094">
    <property type="entry name" value="ADENYLTKNASE"/>
</dbReference>
<dbReference type="SUPFAM" id="SSF52540">
    <property type="entry name" value="P-loop containing nucleoside triphosphate hydrolases"/>
    <property type="match status" value="1"/>
</dbReference>
<dbReference type="PROSITE" id="PS00113">
    <property type="entry name" value="ADENYLATE_KINASE"/>
    <property type="match status" value="1"/>
</dbReference>
<feature type="chain" id="PRO_0000158873" description="Adenylate kinase">
    <location>
        <begin position="1"/>
        <end position="220"/>
    </location>
</feature>
<feature type="region of interest" description="NMP" evidence="1">
    <location>
        <begin position="32"/>
        <end position="62"/>
    </location>
</feature>
<feature type="region of interest" description="LID" evidence="1">
    <location>
        <begin position="129"/>
        <end position="166"/>
    </location>
</feature>
<feature type="binding site" evidence="1">
    <location>
        <begin position="12"/>
        <end position="17"/>
    </location>
    <ligand>
        <name>ATP</name>
        <dbReference type="ChEBI" id="CHEBI:30616"/>
    </ligand>
</feature>
<feature type="binding site" evidence="1">
    <location>
        <position position="33"/>
    </location>
    <ligand>
        <name>AMP</name>
        <dbReference type="ChEBI" id="CHEBI:456215"/>
    </ligand>
</feature>
<feature type="binding site" evidence="1">
    <location>
        <position position="38"/>
    </location>
    <ligand>
        <name>AMP</name>
        <dbReference type="ChEBI" id="CHEBI:456215"/>
    </ligand>
</feature>
<feature type="binding site" evidence="1">
    <location>
        <begin position="60"/>
        <end position="62"/>
    </location>
    <ligand>
        <name>AMP</name>
        <dbReference type="ChEBI" id="CHEBI:456215"/>
    </ligand>
</feature>
<feature type="binding site" evidence="1">
    <location>
        <begin position="88"/>
        <end position="91"/>
    </location>
    <ligand>
        <name>AMP</name>
        <dbReference type="ChEBI" id="CHEBI:456215"/>
    </ligand>
</feature>
<feature type="binding site" evidence="1">
    <location>
        <position position="95"/>
    </location>
    <ligand>
        <name>AMP</name>
        <dbReference type="ChEBI" id="CHEBI:456215"/>
    </ligand>
</feature>
<feature type="binding site" evidence="1">
    <location>
        <position position="130"/>
    </location>
    <ligand>
        <name>ATP</name>
        <dbReference type="ChEBI" id="CHEBI:30616"/>
    </ligand>
</feature>
<feature type="binding site" evidence="1">
    <location>
        <position position="133"/>
    </location>
    <ligand>
        <name>Zn(2+)</name>
        <dbReference type="ChEBI" id="CHEBI:29105"/>
        <note>structural</note>
    </ligand>
</feature>
<feature type="binding site" evidence="1">
    <location>
        <position position="136"/>
    </location>
    <ligand>
        <name>Zn(2+)</name>
        <dbReference type="ChEBI" id="CHEBI:29105"/>
        <note>structural</note>
    </ligand>
</feature>
<feature type="binding site" evidence="1">
    <location>
        <begin position="139"/>
        <end position="140"/>
    </location>
    <ligand>
        <name>ATP</name>
        <dbReference type="ChEBI" id="CHEBI:30616"/>
    </ligand>
</feature>
<feature type="binding site" evidence="1">
    <location>
        <position position="153"/>
    </location>
    <ligand>
        <name>Zn(2+)</name>
        <dbReference type="ChEBI" id="CHEBI:29105"/>
        <note>structural</note>
    </ligand>
</feature>
<feature type="binding site" evidence="1">
    <location>
        <position position="156"/>
    </location>
    <ligand>
        <name>Zn(2+)</name>
        <dbReference type="ChEBI" id="CHEBI:29105"/>
        <note>structural</note>
    </ligand>
</feature>
<feature type="binding site" evidence="1">
    <location>
        <position position="163"/>
    </location>
    <ligand>
        <name>AMP</name>
        <dbReference type="ChEBI" id="CHEBI:456215"/>
    </ligand>
</feature>
<feature type="binding site" evidence="1">
    <location>
        <position position="174"/>
    </location>
    <ligand>
        <name>AMP</name>
        <dbReference type="ChEBI" id="CHEBI:456215"/>
    </ligand>
</feature>
<feature type="binding site" evidence="1">
    <location>
        <position position="202"/>
    </location>
    <ligand>
        <name>ATP</name>
        <dbReference type="ChEBI" id="CHEBI:30616"/>
    </ligand>
</feature>
<organism>
    <name type="scientific">Thermotoga maritima (strain ATCC 43589 / DSM 3109 / JCM 10099 / NBRC 100826 / MSB8)</name>
    <dbReference type="NCBI Taxonomy" id="243274"/>
    <lineage>
        <taxon>Bacteria</taxon>
        <taxon>Thermotogati</taxon>
        <taxon>Thermotogota</taxon>
        <taxon>Thermotogae</taxon>
        <taxon>Thermotogales</taxon>
        <taxon>Thermotogaceae</taxon>
        <taxon>Thermotoga</taxon>
    </lineage>
</organism>
<evidence type="ECO:0000255" key="1">
    <source>
        <dbReference type="HAMAP-Rule" id="MF_00235"/>
    </source>
</evidence>
<proteinExistence type="inferred from homology"/>
<gene>
    <name evidence="1" type="primary">adk</name>
    <name type="ordered locus">TM_1479</name>
</gene>
<protein>
    <recommendedName>
        <fullName evidence="1">Adenylate kinase</fullName>
        <shortName evidence="1">AK</shortName>
        <ecNumber evidence="1">2.7.4.3</ecNumber>
    </recommendedName>
    <alternativeName>
        <fullName evidence="1">ATP-AMP transphosphorylase</fullName>
    </alternativeName>
    <alternativeName>
        <fullName evidence="1">ATP:AMP phosphotransferase</fullName>
    </alternativeName>
    <alternativeName>
        <fullName evidence="1">Adenylate monophosphate kinase</fullName>
    </alternativeName>
</protein>
<accession>Q9X1I8</accession>
<sequence length="220" mass="25169">MMAYLVFLGPPGAGKGTYAKRLQEITGIPHISTGDIFRDIVKKENDELGKKIKEIMERGELVPDELVNEVVKRRLSEKDCERGFILDGYPRTVAQAEFLDGFLKTQNKELTAAVLFEVPEEVVVQRLTARRICPKCGRIYNLISLPPKEDELCDDCKVKLVQREDDKEETVRHRYKVYLEKTQPVIDYYDKKGILKRVDGTIGIDNVIAEVLKIIGWSDK</sequence>
<reference key="1">
    <citation type="journal article" date="1999" name="Nature">
        <title>Evidence for lateral gene transfer between Archaea and Bacteria from genome sequence of Thermotoga maritima.</title>
        <authorList>
            <person name="Nelson K.E."/>
            <person name="Clayton R.A."/>
            <person name="Gill S.R."/>
            <person name="Gwinn M.L."/>
            <person name="Dodson R.J."/>
            <person name="Haft D.H."/>
            <person name="Hickey E.K."/>
            <person name="Peterson J.D."/>
            <person name="Nelson W.C."/>
            <person name="Ketchum K.A."/>
            <person name="McDonald L.A."/>
            <person name="Utterback T.R."/>
            <person name="Malek J.A."/>
            <person name="Linher K.D."/>
            <person name="Garrett M.M."/>
            <person name="Stewart A.M."/>
            <person name="Cotton M.D."/>
            <person name="Pratt M.S."/>
            <person name="Phillips C.A."/>
            <person name="Richardson D.L."/>
            <person name="Heidelberg J.F."/>
            <person name="Sutton G.G."/>
            <person name="Fleischmann R.D."/>
            <person name="Eisen J.A."/>
            <person name="White O."/>
            <person name="Salzberg S.L."/>
            <person name="Smith H.O."/>
            <person name="Venter J.C."/>
            <person name="Fraser C.M."/>
        </authorList>
    </citation>
    <scope>NUCLEOTIDE SEQUENCE [LARGE SCALE GENOMIC DNA]</scope>
    <source>
        <strain>ATCC 43589 / DSM 3109 / JCM 10099 / NBRC 100826 / MSB8</strain>
    </source>
</reference>
<keyword id="KW-0067">ATP-binding</keyword>
<keyword id="KW-0963">Cytoplasm</keyword>
<keyword id="KW-0418">Kinase</keyword>
<keyword id="KW-0479">Metal-binding</keyword>
<keyword id="KW-0545">Nucleotide biosynthesis</keyword>
<keyword id="KW-0547">Nucleotide-binding</keyword>
<keyword id="KW-1185">Reference proteome</keyword>
<keyword id="KW-0808">Transferase</keyword>
<keyword id="KW-0862">Zinc</keyword>
<comment type="function">
    <text evidence="1">Catalyzes the reversible transfer of the terminal phosphate group between ATP and AMP. Plays an important role in cellular energy homeostasis and in adenine nucleotide metabolism.</text>
</comment>
<comment type="catalytic activity">
    <reaction evidence="1">
        <text>AMP + ATP = 2 ADP</text>
        <dbReference type="Rhea" id="RHEA:12973"/>
        <dbReference type="ChEBI" id="CHEBI:30616"/>
        <dbReference type="ChEBI" id="CHEBI:456215"/>
        <dbReference type="ChEBI" id="CHEBI:456216"/>
        <dbReference type="EC" id="2.7.4.3"/>
    </reaction>
</comment>
<comment type="pathway">
    <text evidence="1">Purine metabolism; AMP biosynthesis via salvage pathway; AMP from ADP: step 1/1.</text>
</comment>
<comment type="subunit">
    <text evidence="1">Monomer.</text>
</comment>
<comment type="subcellular location">
    <subcellularLocation>
        <location evidence="1">Cytoplasm</location>
    </subcellularLocation>
</comment>
<comment type="domain">
    <text evidence="1">Consists of three domains, a large central CORE domain and two small peripheral domains, NMPbind and LID, which undergo movements during catalysis. The LID domain closes over the site of phosphoryl transfer upon ATP binding. Assembling and dissambling the active center during each catalytic cycle provides an effective means to prevent ATP hydrolysis. Some bacteria have evolved a zinc-coordinating structure that stabilizes the LID domain.</text>
</comment>
<comment type="similarity">
    <text evidence="1">Belongs to the adenylate kinase family.</text>
</comment>
<name>KAD_THEMA</name>